<sequence>MRCGWMAGSSETVGIMDTADWYIGHGQVTVAPCVSIERSQIKSPDSGYGVFVDVDKLQEEECEAVELLRVPYGNVISVRTLMDWLSGRGDGYDASKDLIKTYLALFLEDTSNHRFVTETNMLILYLALMAILSERGYGFPDKFVIYLRDVLLQTRLLTPVLEVLTQEAGDAGAHYRNGPQEIFLSTLLQFISGAFMGCTRAVVLRVYAAVLSRCLEIPHETSPGSEDYTVSSSLVPILDFTNHSCEHRNAYFDVDRESGDVLLMLDVAACAGLGDRFEVFISYCPVEELVHFKHTYGFFPRASCGTQFWHMFLSDTWLKEERAPHGSGSLFQIYSELRVLPYIELALISGQVYVNDYCSSFPELLLPFVNIEALSDKESKLTALKGDQQLLAEAKTNFLSFLARYLDKLVANGPIRHSGPVCASLRDILLRELELSKRLRNTLQHGSAFLSSHMADTSPPYCPSPAPSPPYAYMYTSS</sequence>
<dbReference type="EC" id="2.1.1.59"/>
<dbReference type="EMBL" id="AE016818">
    <property type="protein sequence ID" value="AAS52927.1"/>
    <property type="molecule type" value="Genomic_DNA"/>
</dbReference>
<dbReference type="RefSeq" id="NP_985103.1">
    <property type="nucleotide sequence ID" value="NM_210457.1"/>
</dbReference>
<dbReference type="FunCoup" id="Q756K8">
    <property type="interactions" value="67"/>
</dbReference>
<dbReference type="STRING" id="284811.Q756K8"/>
<dbReference type="EnsemblFungi" id="AAS52927">
    <property type="protein sequence ID" value="AAS52927"/>
    <property type="gene ID" value="AGOS_AER246W"/>
</dbReference>
<dbReference type="GeneID" id="4621313"/>
<dbReference type="KEGG" id="ago:AGOS_AER246W"/>
<dbReference type="eggNOG" id="ENOG502RXKP">
    <property type="taxonomic scope" value="Eukaryota"/>
</dbReference>
<dbReference type="HOGENOM" id="CLU_571046_0_0_1"/>
<dbReference type="InParanoid" id="Q756K8"/>
<dbReference type="OMA" id="NEHALMI"/>
<dbReference type="OrthoDB" id="441812at2759"/>
<dbReference type="Proteomes" id="UP000000591">
    <property type="component" value="Chromosome V"/>
</dbReference>
<dbReference type="GO" id="GO:0005829">
    <property type="term" value="C:cytosol"/>
    <property type="evidence" value="ECO:0007669"/>
    <property type="project" value="UniProtKB-SubCell"/>
</dbReference>
<dbReference type="GO" id="GO:0000277">
    <property type="term" value="F:[cytochrome c]-lysine N-methyltransferase activity"/>
    <property type="evidence" value="ECO:0007669"/>
    <property type="project" value="UniProtKB-EC"/>
</dbReference>
<dbReference type="GO" id="GO:0032259">
    <property type="term" value="P:methylation"/>
    <property type="evidence" value="ECO:0007669"/>
    <property type="project" value="UniProtKB-KW"/>
</dbReference>
<dbReference type="CDD" id="cd10527">
    <property type="entry name" value="SET_LSMT"/>
    <property type="match status" value="1"/>
</dbReference>
<dbReference type="Gene3D" id="3.90.1410.10">
    <property type="entry name" value="set domain protein methyltransferase, domain 1"/>
    <property type="match status" value="1"/>
</dbReference>
<dbReference type="InterPro" id="IPR025815">
    <property type="entry name" value="Ctm1"/>
</dbReference>
<dbReference type="InterPro" id="IPR001214">
    <property type="entry name" value="SET_dom"/>
</dbReference>
<dbReference type="InterPro" id="IPR046341">
    <property type="entry name" value="SET_dom_sf"/>
</dbReference>
<dbReference type="SUPFAM" id="SSF82199">
    <property type="entry name" value="SET domain"/>
    <property type="match status" value="1"/>
</dbReference>
<dbReference type="PROSITE" id="PS51611">
    <property type="entry name" value="SAM_MT59"/>
    <property type="match status" value="1"/>
</dbReference>
<dbReference type="PROSITE" id="PS50280">
    <property type="entry name" value="SET"/>
    <property type="match status" value="1"/>
</dbReference>
<feature type="chain" id="PRO_0000228981" description="Cytochrome c lysine N-methyltransferase 1">
    <location>
        <begin position="1"/>
        <end position="478"/>
    </location>
</feature>
<feature type="domain" description="SET" evidence="2">
    <location>
        <begin position="32"/>
        <end position="284"/>
    </location>
</feature>
<feature type="region of interest" description="SET-like">
    <location>
        <begin position="199"/>
        <end position="299"/>
    </location>
</feature>
<keyword id="KW-0963">Cytoplasm</keyword>
<keyword id="KW-0489">Methyltransferase</keyword>
<keyword id="KW-1185">Reference proteome</keyword>
<keyword id="KW-0949">S-adenosyl-L-methionine</keyword>
<keyword id="KW-0808">Transferase</keyword>
<accession>Q756K8</accession>
<organism>
    <name type="scientific">Eremothecium gossypii (strain ATCC 10895 / CBS 109.51 / FGSC 9923 / NRRL Y-1056)</name>
    <name type="common">Yeast</name>
    <name type="synonym">Ashbya gossypii</name>
    <dbReference type="NCBI Taxonomy" id="284811"/>
    <lineage>
        <taxon>Eukaryota</taxon>
        <taxon>Fungi</taxon>
        <taxon>Dikarya</taxon>
        <taxon>Ascomycota</taxon>
        <taxon>Saccharomycotina</taxon>
        <taxon>Saccharomycetes</taxon>
        <taxon>Saccharomycetales</taxon>
        <taxon>Saccharomycetaceae</taxon>
        <taxon>Eremothecium</taxon>
    </lineage>
</organism>
<gene>
    <name type="primary">CTM1</name>
    <name type="ordered locus">AER246W</name>
</gene>
<evidence type="ECO:0000250" key="1"/>
<evidence type="ECO:0000255" key="2">
    <source>
        <dbReference type="PROSITE-ProRule" id="PRU00190"/>
    </source>
</evidence>
<evidence type="ECO:0000255" key="3">
    <source>
        <dbReference type="PROSITE-ProRule" id="PRU00943"/>
    </source>
</evidence>
<comment type="function">
    <text evidence="1">Methyltransferase which mediates trimethylation of cytochrome c (CYC1).</text>
</comment>
<comment type="catalytic activity">
    <reaction evidence="3">
        <text>L-lysyl-[cytochrome c] + S-adenosyl-L-methionine = N(6)-methyl-L-lysyl-[cytochrome c] + S-adenosyl-L-homocysteine + H(+)</text>
        <dbReference type="Rhea" id="RHEA:24312"/>
        <dbReference type="Rhea" id="RHEA-COMP:9754"/>
        <dbReference type="Rhea" id="RHEA-COMP:9755"/>
        <dbReference type="ChEBI" id="CHEBI:15378"/>
        <dbReference type="ChEBI" id="CHEBI:29969"/>
        <dbReference type="ChEBI" id="CHEBI:57856"/>
        <dbReference type="ChEBI" id="CHEBI:59789"/>
        <dbReference type="ChEBI" id="CHEBI:61929"/>
        <dbReference type="EC" id="2.1.1.59"/>
    </reaction>
</comment>
<comment type="subcellular location">
    <subcellularLocation>
        <location evidence="1">Cytoplasm</location>
        <location evidence="1">Cytosol</location>
    </subcellularLocation>
</comment>
<comment type="domain">
    <text evidence="1">The SET-like region, although related with the SET domain is not detected by any prediction method.</text>
</comment>
<comment type="similarity">
    <text evidence="2 3">Belongs to the class V-like SAM-binding methyltransferase superfamily.</text>
</comment>
<protein>
    <recommendedName>
        <fullName>Cytochrome c lysine N-methyltransferase 1</fullName>
        <ecNumber>2.1.1.59</ecNumber>
    </recommendedName>
</protein>
<name>CTM1_EREGS</name>
<proteinExistence type="inferred from homology"/>
<reference key="1">
    <citation type="journal article" date="2004" name="Science">
        <title>The Ashbya gossypii genome as a tool for mapping the ancient Saccharomyces cerevisiae genome.</title>
        <authorList>
            <person name="Dietrich F.S."/>
            <person name="Voegeli S."/>
            <person name="Brachat S."/>
            <person name="Lerch A."/>
            <person name="Gates K."/>
            <person name="Steiner S."/>
            <person name="Mohr C."/>
            <person name="Poehlmann R."/>
            <person name="Luedi P."/>
            <person name="Choi S."/>
            <person name="Wing R.A."/>
            <person name="Flavier A."/>
            <person name="Gaffney T.D."/>
            <person name="Philippsen P."/>
        </authorList>
    </citation>
    <scope>NUCLEOTIDE SEQUENCE [LARGE SCALE GENOMIC DNA]</scope>
    <source>
        <strain>ATCC 10895 / CBS 109.51 / FGSC 9923 / NRRL Y-1056</strain>
    </source>
</reference>
<reference key="2">
    <citation type="journal article" date="2013" name="G3 (Bethesda)">
        <title>Genomes of Ashbya fungi isolated from insects reveal four mating-type loci, numerous translocations, lack of transposons, and distinct gene duplications.</title>
        <authorList>
            <person name="Dietrich F.S."/>
            <person name="Voegeli S."/>
            <person name="Kuo S."/>
            <person name="Philippsen P."/>
        </authorList>
    </citation>
    <scope>GENOME REANNOTATION</scope>
    <source>
        <strain>ATCC 10895 / CBS 109.51 / FGSC 9923 / NRRL Y-1056</strain>
    </source>
</reference>